<protein>
    <recommendedName>
        <fullName evidence="8">AA9 family lytic polysaccharide monooxygenase G</fullName>
        <shortName evidence="8">LPMO9G</shortName>
        <ecNumber evidence="7">1.14.99.56</ecNumber>
    </recommendedName>
    <alternativeName>
        <fullName evidence="9">Cellulase LPMO9G</fullName>
    </alternativeName>
    <alternativeName>
        <fullName evidence="9">Endo-beta-1,4-glucanase LPMO9G</fullName>
        <shortName evidence="9">Endoglucanase LPMO9G</shortName>
    </alternativeName>
    <alternativeName>
        <fullName evidence="9">Glycosyl hydrolase 61 family protein LPMO9G</fullName>
    </alternativeName>
</protein>
<feature type="signal peptide" evidence="3">
    <location>
        <begin position="1"/>
        <end position="22"/>
    </location>
</feature>
<feature type="chain" id="PRO_5010234076" description="AA9 family lytic polysaccharide monooxygenase G">
    <location>
        <begin position="23"/>
        <end position="272"/>
    </location>
</feature>
<feature type="binding site" evidence="1">
    <location>
        <position position="23"/>
    </location>
    <ligand>
        <name>Cu(2+)</name>
        <dbReference type="ChEBI" id="CHEBI:29036"/>
        <note>catalytic</note>
    </ligand>
</feature>
<feature type="binding site" evidence="1">
    <location>
        <position position="110"/>
    </location>
    <ligand>
        <name>Cu(2+)</name>
        <dbReference type="ChEBI" id="CHEBI:29036"/>
        <note>catalytic</note>
    </ligand>
</feature>
<feature type="binding site" evidence="1">
    <location>
        <position position="188"/>
    </location>
    <ligand>
        <name>O2</name>
        <dbReference type="ChEBI" id="CHEBI:15379"/>
    </ligand>
</feature>
<feature type="binding site" evidence="1">
    <location>
        <position position="197"/>
    </location>
    <ligand>
        <name>O2</name>
        <dbReference type="ChEBI" id="CHEBI:15379"/>
    </ligand>
</feature>
<feature type="binding site" evidence="1">
    <location>
        <position position="199"/>
    </location>
    <ligand>
        <name>Cu(2+)</name>
        <dbReference type="ChEBI" id="CHEBI:29036"/>
        <note>catalytic</note>
    </ligand>
</feature>
<feature type="glycosylation site" description="N-linked (GlcNAc...) asparagine" evidence="4">
    <location>
        <position position="60"/>
    </location>
</feature>
<feature type="disulfide bond" evidence="2">
    <location>
        <begin position="78"/>
        <end position="202"/>
    </location>
</feature>
<feature type="disulfide bond" evidence="2">
    <location>
        <begin position="121"/>
        <end position="125"/>
    </location>
</feature>
<accession>C8V530</accession>
<proteinExistence type="evidence at protein level"/>
<reference key="1">
    <citation type="journal article" date="2005" name="Nature">
        <title>Sequencing of Aspergillus nidulans and comparative analysis with A. fumigatus and A. oryzae.</title>
        <authorList>
            <person name="Galagan J.E."/>
            <person name="Calvo S.E."/>
            <person name="Cuomo C."/>
            <person name="Ma L.-J."/>
            <person name="Wortman J.R."/>
            <person name="Batzoglou S."/>
            <person name="Lee S.-I."/>
            <person name="Bastuerkmen M."/>
            <person name="Spevak C.C."/>
            <person name="Clutterbuck J."/>
            <person name="Kapitonov V."/>
            <person name="Jurka J."/>
            <person name="Scazzocchio C."/>
            <person name="Farman M.L."/>
            <person name="Butler J."/>
            <person name="Purcell S."/>
            <person name="Harris S."/>
            <person name="Braus G.H."/>
            <person name="Draht O."/>
            <person name="Busch S."/>
            <person name="D'Enfert C."/>
            <person name="Bouchier C."/>
            <person name="Goldman G.H."/>
            <person name="Bell-Pedersen D."/>
            <person name="Griffiths-Jones S."/>
            <person name="Doonan J.H."/>
            <person name="Yu J."/>
            <person name="Vienken K."/>
            <person name="Pain A."/>
            <person name="Freitag M."/>
            <person name="Selker E.U."/>
            <person name="Archer D.B."/>
            <person name="Penalva M.A."/>
            <person name="Oakley B.R."/>
            <person name="Momany M."/>
            <person name="Tanaka T."/>
            <person name="Kumagai T."/>
            <person name="Asai K."/>
            <person name="Machida M."/>
            <person name="Nierman W.C."/>
            <person name="Denning D.W."/>
            <person name="Caddick M.X."/>
            <person name="Hynes M."/>
            <person name="Paoletti M."/>
            <person name="Fischer R."/>
            <person name="Miller B.L."/>
            <person name="Dyer P.S."/>
            <person name="Sachs M.S."/>
            <person name="Osmani S.A."/>
            <person name="Birren B.W."/>
        </authorList>
    </citation>
    <scope>NUCLEOTIDE SEQUENCE [LARGE SCALE GENOMIC DNA]</scope>
    <source>
        <strain>FGSC A4 / ATCC 38163 / CBS 112.46 / NRRL 194 / M139</strain>
    </source>
</reference>
<reference key="2">
    <citation type="journal article" date="2009" name="Fungal Genet. Biol.">
        <title>The 2008 update of the Aspergillus nidulans genome annotation: a community effort.</title>
        <authorList>
            <person name="Wortman J.R."/>
            <person name="Gilsenan J.M."/>
            <person name="Joardar V."/>
            <person name="Deegan J."/>
            <person name="Clutterbuck J."/>
            <person name="Andersen M.R."/>
            <person name="Archer D."/>
            <person name="Bencina M."/>
            <person name="Braus G."/>
            <person name="Coutinho P."/>
            <person name="von Dohren H."/>
            <person name="Doonan J."/>
            <person name="Driessen A.J."/>
            <person name="Durek P."/>
            <person name="Espeso E."/>
            <person name="Fekete E."/>
            <person name="Flipphi M."/>
            <person name="Estrada C.G."/>
            <person name="Geysens S."/>
            <person name="Goldman G."/>
            <person name="de Groot P.W."/>
            <person name="Hansen K."/>
            <person name="Harris S.D."/>
            <person name="Heinekamp T."/>
            <person name="Helmstaedt K."/>
            <person name="Henrissat B."/>
            <person name="Hofmann G."/>
            <person name="Homan T."/>
            <person name="Horio T."/>
            <person name="Horiuchi H."/>
            <person name="James S."/>
            <person name="Jones M."/>
            <person name="Karaffa L."/>
            <person name="Karanyi Z."/>
            <person name="Kato M."/>
            <person name="Keller N."/>
            <person name="Kelly D.E."/>
            <person name="Kiel J.A."/>
            <person name="Kim J.M."/>
            <person name="van der Klei I.J."/>
            <person name="Klis F.M."/>
            <person name="Kovalchuk A."/>
            <person name="Krasevec N."/>
            <person name="Kubicek C.P."/>
            <person name="Liu B."/>
            <person name="Maccabe A."/>
            <person name="Meyer V."/>
            <person name="Mirabito P."/>
            <person name="Miskei M."/>
            <person name="Mos M."/>
            <person name="Mullins J."/>
            <person name="Nelson D.R."/>
            <person name="Nielsen J."/>
            <person name="Oakley B.R."/>
            <person name="Osmani S.A."/>
            <person name="Pakula T."/>
            <person name="Paszewski A."/>
            <person name="Paulsen I."/>
            <person name="Pilsyk S."/>
            <person name="Pocsi I."/>
            <person name="Punt P.J."/>
            <person name="Ram A.F."/>
            <person name="Ren Q."/>
            <person name="Robellet X."/>
            <person name="Robson G."/>
            <person name="Seiboth B."/>
            <person name="van Solingen P."/>
            <person name="Specht T."/>
            <person name="Sun J."/>
            <person name="Taheri-Talesh N."/>
            <person name="Takeshita N."/>
            <person name="Ussery D."/>
            <person name="vanKuyk P.A."/>
            <person name="Visser H."/>
            <person name="van de Vondervoort P.J."/>
            <person name="de Vries R.P."/>
            <person name="Walton J."/>
            <person name="Xiang X."/>
            <person name="Xiong Y."/>
            <person name="Zeng A.P."/>
            <person name="Brandt B.W."/>
            <person name="Cornell M.J."/>
            <person name="van den Hondel C.A."/>
            <person name="Visser J."/>
            <person name="Oliver S.G."/>
            <person name="Turner G."/>
        </authorList>
    </citation>
    <scope>GENOME REANNOTATION</scope>
    <source>
        <strain>FGSC A4 / ATCC 38163 / CBS 112.46 / NRRL 194 / M139</strain>
    </source>
</reference>
<reference key="3">
    <citation type="journal article" date="2012" name="Biotechnol. Biofuels">
        <title>A time course analysis of the extracellular proteome of Aspergillus nidulans growing on sorghum stover.</title>
        <authorList>
            <person name="Saykhedkar S."/>
            <person name="Ray A."/>
            <person name="Ayoubi-Canaan P."/>
            <person name="Hartson S.D."/>
            <person name="Prade R."/>
            <person name="Mort A.J."/>
        </authorList>
    </citation>
    <scope>SUBCELLULAR LOCATION</scope>
</reference>
<reference key="4">
    <citation type="journal article" date="2016" name="Appl. Microbiol. Biotechnol.">
        <title>A family of AA9 lytic polysaccharide monooxygenases in Aspergillus nidulans is differentially regulated by multiple substrates and at least one is active on cellulose and xyloglucan.</title>
        <authorList>
            <person name="Jagadeeswaran G."/>
            <person name="Gainey L."/>
            <person name="Prade R."/>
            <person name="Mort A.J."/>
        </authorList>
    </citation>
    <scope>FUNCTION</scope>
    <scope>INDUCTION</scope>
    <scope>BIOTECHNOLOGY</scope>
</reference>
<reference key="5">
    <citation type="journal article" date="2016" name="Biotechnol. Biofuels">
        <title>Lytic polysaccharide monooxygenases and other oxidative enzymes are abundantly secreted by Aspergillus nidulans grown on different starches.</title>
        <authorList>
            <person name="Nekiunaite L."/>
            <person name="Arntzen M.O."/>
            <person name="Svensson B."/>
            <person name="Vaaje-Kolstad G."/>
            <person name="Abou Hachem M."/>
        </authorList>
    </citation>
    <scope>IDENTIFICATION</scope>
</reference>
<reference key="6">
    <citation type="journal article" date="2022" name="Microbiol. Spectr.">
        <title>Deletion of AA9 Lytic Polysaccharide Monooxygenases Impacts A. nidulans Secretome and Growth on Lignocellulose.</title>
        <authorList>
            <person name="Terrasan C.R.F."/>
            <person name="Rubio M.V."/>
            <person name="Gerhardt J.A."/>
            <person name="Cairo J.P.F."/>
            <person name="Contesini F.J."/>
            <person name="Zubieta M.P."/>
            <person name="Figueiredo F.L."/>
            <person name="Valadares F.L."/>
            <person name="Correa T.L.R."/>
            <person name="Murakami M.T."/>
            <person name="Franco T.T."/>
            <person name="Davies G.J."/>
            <person name="Walton P.H."/>
            <person name="Damasio A."/>
        </authorList>
    </citation>
    <scope>FUNCTION</scope>
    <scope>CATALYTIC ACTIVITY</scope>
    <scope>DISRUPTION PHENOTYPE</scope>
    <scope>SUBCELLULAR LOCATION</scope>
    <scope>INDUCTION</scope>
</reference>
<comment type="function">
    <text evidence="6 7">Lytic polysaccharide monooxygenase (LPMO) that depolymerizes crystalline and amorphous polysaccharides via the oxidation of scissile alpha- or beta-(1-4)-glycosidic bonds, yielding C1 or C4 oxidation products (PubMed:27075737, PubMed:35658600). Catalysis by LPMOs requires the reduction of the active-site copper from Cu(II) to Cu(I) by a reducing agent and H(2)O(2) or O(2) as a cosubstrate (PubMed:35658600). Acts preferentially on crystalline regions of cellulose such as highly crystalline algae cellulose (PubMed:35658600).</text>
</comment>
<comment type="catalytic activity">
    <reaction evidence="7">
        <text>[(1-&gt;4)-beta-D-glucosyl]n+m + reduced acceptor + O2 = 4-dehydro-beta-D-glucosyl-[(1-&gt;4)-beta-D-glucosyl]n-1 + [(1-&gt;4)-beta-D-glucosyl]m + acceptor + H2O.</text>
        <dbReference type="EC" id="1.14.99.56"/>
    </reaction>
</comment>
<comment type="cofactor">
    <cofactor evidence="1">
        <name>Cu(2+)</name>
        <dbReference type="ChEBI" id="CHEBI:29036"/>
    </cofactor>
    <text evidence="1">Binds 1 copper ion per subunit.</text>
</comment>
<comment type="subcellular location">
    <subcellularLocation>
        <location evidence="5 7">Secreted</location>
    </subcellularLocation>
</comment>
<comment type="induction">
    <text evidence="7">Expression is induced on lignocellulosic substrates such as sugarcane straw (SCS) or steam-exploded sugarcane bagasse (SCB).</text>
</comment>
<comment type="disruption phenotype">
    <text evidence="7">Results in about 25% reduction in fungal growth on sugarcane straw but not on Avicel (PubMed:35658600). Results in moderate reduction in activity using phosphoric acid-swollen cellulose (PASC) as the substrate (PubMed:35658600).</text>
</comment>
<comment type="biotechnology">
    <text evidence="10">Lignocellulose is the most abundant polymeric composite on Earth and is a recalcitrant but promising renewable substrate for industrial biotechnology applications. Together with cellobiose dehydrogenases (CDHs) an enzymatic system capable of oxidative cellulose cleavage is formed, which increases the efficiency of cellulases and put LPMOs at focus of biofuel research.</text>
</comment>
<comment type="similarity">
    <text evidence="9">Belongs to the polysaccharide monooxygenase AA9 family.</text>
</comment>
<dbReference type="EC" id="1.14.99.56" evidence="7"/>
<dbReference type="EMBL" id="BN001302">
    <property type="protein sequence ID" value="CBF76006.1"/>
    <property type="molecule type" value="Genomic_DNA"/>
</dbReference>
<dbReference type="SMR" id="C8V530"/>
<dbReference type="STRING" id="227321.C8V530"/>
<dbReference type="EnsemblFungi" id="CBF76006">
    <property type="protein sequence ID" value="CBF76006"/>
    <property type="gene ID" value="ANIA_10419"/>
</dbReference>
<dbReference type="VEuPathDB" id="FungiDB:AN10419"/>
<dbReference type="eggNOG" id="ENOG502RY3D">
    <property type="taxonomic scope" value="Eukaryota"/>
</dbReference>
<dbReference type="HOGENOM" id="CLU_031730_1_3_1"/>
<dbReference type="InParanoid" id="C8V530"/>
<dbReference type="OMA" id="NDWPSSH"/>
<dbReference type="OrthoDB" id="4849160at2759"/>
<dbReference type="Proteomes" id="UP000000560">
    <property type="component" value="Chromosome II"/>
</dbReference>
<dbReference type="GO" id="GO:0005576">
    <property type="term" value="C:extracellular region"/>
    <property type="evidence" value="ECO:0007669"/>
    <property type="project" value="UniProtKB-SubCell"/>
</dbReference>
<dbReference type="GO" id="GO:0046872">
    <property type="term" value="F:metal ion binding"/>
    <property type="evidence" value="ECO:0007669"/>
    <property type="project" value="UniProtKB-KW"/>
</dbReference>
<dbReference type="GO" id="GO:0004497">
    <property type="term" value="F:monooxygenase activity"/>
    <property type="evidence" value="ECO:0007669"/>
    <property type="project" value="UniProtKB-KW"/>
</dbReference>
<dbReference type="GO" id="GO:0030245">
    <property type="term" value="P:cellulose catabolic process"/>
    <property type="evidence" value="ECO:0007669"/>
    <property type="project" value="UniProtKB-KW"/>
</dbReference>
<dbReference type="CDD" id="cd21175">
    <property type="entry name" value="LPMO_AA9"/>
    <property type="match status" value="1"/>
</dbReference>
<dbReference type="Gene3D" id="2.70.50.70">
    <property type="match status" value="1"/>
</dbReference>
<dbReference type="InterPro" id="IPR049892">
    <property type="entry name" value="AA9"/>
</dbReference>
<dbReference type="InterPro" id="IPR005103">
    <property type="entry name" value="AA9_LPMO"/>
</dbReference>
<dbReference type="PANTHER" id="PTHR33353:SF36">
    <property type="entry name" value="ENDO-BETA-1,4-GLUCANASE D"/>
    <property type="match status" value="1"/>
</dbReference>
<dbReference type="PANTHER" id="PTHR33353">
    <property type="entry name" value="PUTATIVE (AFU_ORTHOLOGUE AFUA_1G12560)-RELATED"/>
    <property type="match status" value="1"/>
</dbReference>
<dbReference type="Pfam" id="PF03443">
    <property type="entry name" value="AA9"/>
    <property type="match status" value="1"/>
</dbReference>
<organism>
    <name type="scientific">Emericella nidulans (strain FGSC A4 / ATCC 38163 / CBS 112.46 / NRRL 194 / M139)</name>
    <name type="common">Aspergillus nidulans</name>
    <dbReference type="NCBI Taxonomy" id="227321"/>
    <lineage>
        <taxon>Eukaryota</taxon>
        <taxon>Fungi</taxon>
        <taxon>Dikarya</taxon>
        <taxon>Ascomycota</taxon>
        <taxon>Pezizomycotina</taxon>
        <taxon>Eurotiomycetes</taxon>
        <taxon>Eurotiomycetidae</taxon>
        <taxon>Eurotiales</taxon>
        <taxon>Aspergillaceae</taxon>
        <taxon>Aspergillus</taxon>
        <taxon>Aspergillus subgen. Nidulantes</taxon>
    </lineage>
</organism>
<name>LP9G_EMENI</name>
<sequence length="272" mass="28710">MKGAGSASFLLTLLSTITRTSAHGYVSNIVINGVSYRGWLPSQDPYSPSPPIGVGWETPNLSNGFVTPEEASTDAIICHKEATPARGHATVAAGDKIYIQWQPIPWPDSHHGPVLDYLAPCNGDCQTVDKNSLEFFKISGVGLIDGSSPPGYWADDELIENGNGWLVQIPADIKPGNYVLRHEIIALHGAGSQNGAQLYPQCFNLKITGSGTAEPAGVPGPELYSPTDPGILINIYQVLTDYVVPGPTPIPQAVEVAQSSSVITATGTPTPV</sequence>
<gene>
    <name evidence="8" type="primary">LPMO9G</name>
    <name type="ORF">AN3511</name>
    <name type="ORF">ANIA_10419</name>
</gene>
<evidence type="ECO:0000250" key="1">
    <source>
        <dbReference type="UniProtKB" id="Q1K8B6"/>
    </source>
</evidence>
<evidence type="ECO:0000250" key="2">
    <source>
        <dbReference type="UniProtKB" id="Q4WP32"/>
    </source>
</evidence>
<evidence type="ECO:0000255" key="3"/>
<evidence type="ECO:0000255" key="4">
    <source>
        <dbReference type="PROSITE-ProRule" id="PRU00498"/>
    </source>
</evidence>
<evidence type="ECO:0000269" key="5">
    <source>
    </source>
</evidence>
<evidence type="ECO:0000269" key="6">
    <source>
    </source>
</evidence>
<evidence type="ECO:0000269" key="7">
    <source>
    </source>
</evidence>
<evidence type="ECO:0000303" key="8">
    <source>
    </source>
</evidence>
<evidence type="ECO:0000305" key="9"/>
<evidence type="ECO:0000305" key="10">
    <source>
    </source>
</evidence>
<keyword id="KW-0119">Carbohydrate metabolism</keyword>
<keyword id="KW-0136">Cellulose degradation</keyword>
<keyword id="KW-0186">Copper</keyword>
<keyword id="KW-1015">Disulfide bond</keyword>
<keyword id="KW-0325">Glycoprotein</keyword>
<keyword id="KW-0479">Metal-binding</keyword>
<keyword id="KW-0503">Monooxygenase</keyword>
<keyword id="KW-0560">Oxidoreductase</keyword>
<keyword id="KW-0624">Polysaccharide degradation</keyword>
<keyword id="KW-1185">Reference proteome</keyword>
<keyword id="KW-0964">Secreted</keyword>
<keyword id="KW-0732">Signal</keyword>